<reference key="1">
    <citation type="journal article" date="1996" name="Mol. Biol. Evol.">
        <title>Phylogenetic analysis of carbamoylphosphate synthetase genes: complex evolutionary history includes an internal duplication within a gene which can root the tree of life.</title>
        <authorList>
            <person name="Lawson F.S."/>
            <person name="Charlebois R.L."/>
            <person name="Dillon J.A."/>
        </authorList>
    </citation>
    <scope>NUCLEOTIDE SEQUENCE [GENOMIC DNA]</scope>
    <source>
        <strain>ATCC 35092 / DSM 1617 / JCM 11322 / P2</strain>
    </source>
</reference>
<reference key="2">
    <citation type="journal article" date="2000" name="Genome">
        <title>Gene content and organization of a 281-kbp contig from the genome of the extremely thermophilic archaeon, Sulfolobus solfataricus P2.</title>
        <authorList>
            <person name="Charlebois R.L."/>
            <person name="Singh R.K."/>
            <person name="Chan-Weiher C.C.-Y."/>
            <person name="Allard G."/>
            <person name="Chow C."/>
            <person name="Confalonieri F."/>
            <person name="Curtis B."/>
            <person name="Duguet M."/>
            <person name="Erauso G."/>
            <person name="Faguy D."/>
            <person name="Gaasterland T."/>
            <person name="Garrett R.A."/>
            <person name="Gordon P."/>
            <person name="Jeffries A.C."/>
            <person name="Kozera C."/>
            <person name="Kushwaha N."/>
            <person name="Lafleur E."/>
            <person name="Medina N."/>
            <person name="Peng X."/>
            <person name="Penny S.L."/>
            <person name="She Q."/>
            <person name="St Jean A."/>
            <person name="van der Oost J."/>
            <person name="Young F."/>
            <person name="Zivanovic Y."/>
            <person name="Doolittle W.F."/>
            <person name="Ragan M.A."/>
            <person name="Sensen C.W."/>
        </authorList>
    </citation>
    <scope>NUCLEOTIDE SEQUENCE [LARGE SCALE GENOMIC DNA]</scope>
    <source>
        <strain>ATCC 35092 / DSM 1617 / JCM 11322 / P2</strain>
    </source>
</reference>
<reference key="3">
    <citation type="journal article" date="2001" name="Proc. Natl. Acad. Sci. U.S.A.">
        <title>The complete genome of the crenarchaeon Sulfolobus solfataricus P2.</title>
        <authorList>
            <person name="She Q."/>
            <person name="Singh R.K."/>
            <person name="Confalonieri F."/>
            <person name="Zivanovic Y."/>
            <person name="Allard G."/>
            <person name="Awayez M.J."/>
            <person name="Chan-Weiher C.C.-Y."/>
            <person name="Clausen I.G."/>
            <person name="Curtis B.A."/>
            <person name="De Moors A."/>
            <person name="Erauso G."/>
            <person name="Fletcher C."/>
            <person name="Gordon P.M.K."/>
            <person name="Heikamp-de Jong I."/>
            <person name="Jeffries A.C."/>
            <person name="Kozera C.J."/>
            <person name="Medina N."/>
            <person name="Peng X."/>
            <person name="Thi-Ngoc H.P."/>
            <person name="Redder P."/>
            <person name="Schenk M.E."/>
            <person name="Theriault C."/>
            <person name="Tolstrup N."/>
            <person name="Charlebois R.L."/>
            <person name="Doolittle W.F."/>
            <person name="Duguet M."/>
            <person name="Gaasterland T."/>
            <person name="Garrett R.A."/>
            <person name="Ragan M.A."/>
            <person name="Sensen C.W."/>
            <person name="Van der Oost J."/>
        </authorList>
    </citation>
    <scope>NUCLEOTIDE SEQUENCE [LARGE SCALE GENOMIC DNA]</scope>
    <source>
        <strain>ATCC 35092 / DSM 1617 / JCM 11322 / P2</strain>
    </source>
</reference>
<comment type="function">
    <text evidence="1">Small subunit of the glutamine-dependent carbamoyl phosphate synthetase (CPSase). CPSase catalyzes the formation of carbamoyl phosphate from the ammonia moiety of glutamine, carbonate, and phosphate donated by ATP, constituting the first step of 2 biosynthetic pathways, one leading to arginine and/or urea and the other to pyrimidine nucleotides. The small subunit (glutamine amidotransferase) binds and cleaves glutamine to supply the large subunit with the substrate ammonia.</text>
</comment>
<comment type="catalytic activity">
    <reaction evidence="1">
        <text>hydrogencarbonate + L-glutamine + 2 ATP + H2O = carbamoyl phosphate + L-glutamate + 2 ADP + phosphate + 2 H(+)</text>
        <dbReference type="Rhea" id="RHEA:18633"/>
        <dbReference type="ChEBI" id="CHEBI:15377"/>
        <dbReference type="ChEBI" id="CHEBI:15378"/>
        <dbReference type="ChEBI" id="CHEBI:17544"/>
        <dbReference type="ChEBI" id="CHEBI:29985"/>
        <dbReference type="ChEBI" id="CHEBI:30616"/>
        <dbReference type="ChEBI" id="CHEBI:43474"/>
        <dbReference type="ChEBI" id="CHEBI:58228"/>
        <dbReference type="ChEBI" id="CHEBI:58359"/>
        <dbReference type="ChEBI" id="CHEBI:456216"/>
        <dbReference type="EC" id="6.3.5.5"/>
    </reaction>
</comment>
<comment type="catalytic activity">
    <molecule>Carbamoyl phosphate synthase small chain</molecule>
    <reaction evidence="1">
        <text>L-glutamine + H2O = L-glutamate + NH4(+)</text>
        <dbReference type="Rhea" id="RHEA:15889"/>
        <dbReference type="ChEBI" id="CHEBI:15377"/>
        <dbReference type="ChEBI" id="CHEBI:28938"/>
        <dbReference type="ChEBI" id="CHEBI:29985"/>
        <dbReference type="ChEBI" id="CHEBI:58359"/>
    </reaction>
</comment>
<comment type="pathway">
    <text evidence="1">Amino-acid biosynthesis; L-arginine biosynthesis; carbamoyl phosphate from bicarbonate: step 1/1.</text>
</comment>
<comment type="pathway">
    <text evidence="1">Pyrimidine metabolism; UMP biosynthesis via de novo pathway; (S)-dihydroorotate from bicarbonate: step 1/3.</text>
</comment>
<comment type="subunit">
    <text evidence="1">Composed of two chains; the small (or glutamine) chain promotes the hydrolysis of glutamine to ammonia, which is used by the large (or ammonia) chain to synthesize carbamoyl phosphate. Tetramer of heterodimers (alpha,beta)4.</text>
</comment>
<comment type="similarity">
    <text evidence="1">Belongs to the CarA family.</text>
</comment>
<feature type="chain" id="PRO_0000112365" description="Carbamoyl phosphate synthase small chain">
    <location>
        <begin position="1"/>
        <end position="367"/>
    </location>
</feature>
<feature type="domain" description="Glutamine amidotransferase type-1" evidence="1">
    <location>
        <begin position="182"/>
        <end position="367"/>
    </location>
</feature>
<feature type="region of interest" description="CPSase" evidence="1">
    <location>
        <begin position="1"/>
        <end position="182"/>
    </location>
</feature>
<feature type="active site" description="Nucleophile" evidence="1">
    <location>
        <position position="258"/>
    </location>
</feature>
<feature type="active site" evidence="1">
    <location>
        <position position="343"/>
    </location>
</feature>
<feature type="active site" evidence="1">
    <location>
        <position position="345"/>
    </location>
</feature>
<feature type="binding site" evidence="1">
    <location>
        <position position="50"/>
    </location>
    <ligand>
        <name>L-glutamine</name>
        <dbReference type="ChEBI" id="CHEBI:58359"/>
    </ligand>
</feature>
<feature type="binding site" evidence="1">
    <location>
        <position position="230"/>
    </location>
    <ligand>
        <name>L-glutamine</name>
        <dbReference type="ChEBI" id="CHEBI:58359"/>
    </ligand>
</feature>
<feature type="binding site" evidence="1">
    <location>
        <position position="232"/>
    </location>
    <ligand>
        <name>L-glutamine</name>
        <dbReference type="ChEBI" id="CHEBI:58359"/>
    </ligand>
</feature>
<feature type="binding site" evidence="1">
    <location>
        <position position="259"/>
    </location>
    <ligand>
        <name>L-glutamine</name>
        <dbReference type="ChEBI" id="CHEBI:58359"/>
    </ligand>
</feature>
<feature type="binding site" evidence="1">
    <location>
        <position position="262"/>
    </location>
    <ligand>
        <name>L-glutamine</name>
        <dbReference type="ChEBI" id="CHEBI:58359"/>
    </ligand>
</feature>
<feature type="binding site" evidence="1">
    <location>
        <position position="300"/>
    </location>
    <ligand>
        <name>L-glutamine</name>
        <dbReference type="ChEBI" id="CHEBI:58359"/>
    </ligand>
</feature>
<feature type="binding site" evidence="1">
    <location>
        <position position="302"/>
    </location>
    <ligand>
        <name>L-glutamine</name>
        <dbReference type="ChEBI" id="CHEBI:58359"/>
    </ligand>
</feature>
<feature type="binding site" evidence="1">
    <location>
        <position position="303"/>
    </location>
    <ligand>
        <name>L-glutamine</name>
        <dbReference type="ChEBI" id="CHEBI:58359"/>
    </ligand>
</feature>
<organism>
    <name type="scientific">Saccharolobus solfataricus (strain ATCC 35092 / DSM 1617 / JCM 11322 / P2)</name>
    <name type="common">Sulfolobus solfataricus</name>
    <dbReference type="NCBI Taxonomy" id="273057"/>
    <lineage>
        <taxon>Archaea</taxon>
        <taxon>Thermoproteota</taxon>
        <taxon>Thermoprotei</taxon>
        <taxon>Sulfolobales</taxon>
        <taxon>Sulfolobaceae</taxon>
        <taxon>Saccharolobus</taxon>
    </lineage>
</organism>
<keyword id="KW-0028">Amino-acid biosynthesis</keyword>
<keyword id="KW-0055">Arginine biosynthesis</keyword>
<keyword id="KW-0067">ATP-binding</keyword>
<keyword id="KW-0315">Glutamine amidotransferase</keyword>
<keyword id="KW-0436">Ligase</keyword>
<keyword id="KW-0547">Nucleotide-binding</keyword>
<keyword id="KW-0665">Pyrimidine biosynthesis</keyword>
<keyword id="KW-1185">Reference proteome</keyword>
<accession>Q59968</accession>
<protein>
    <recommendedName>
        <fullName evidence="1">Carbamoyl phosphate synthase small chain</fullName>
        <ecNumber evidence="1">6.3.5.5</ecNumber>
    </recommendedName>
    <alternativeName>
        <fullName evidence="1">Carbamoyl phosphate synthetase glutamine chain</fullName>
    </alternativeName>
</protein>
<evidence type="ECO:0000255" key="1">
    <source>
        <dbReference type="HAMAP-Rule" id="MF_01209"/>
    </source>
</evidence>
<gene>
    <name evidence="1" type="primary">carA</name>
    <name type="ordered locus">SSO0640</name>
</gene>
<sequence length="367" mass="41480">MKLENKKGYLYLEDGTFIEGYSFGAKGIKVGEVVFTTSMNGYVESLTDPSYKGQILIITHPLVGNYGVPEKKYEQGILTNFESERIQVEGLIVAEHTYPSKWNSALTLDEWLKSENVPGVFDVDTRMIVKKIRTYGTMMGIIASELEIDDPRKYLEKKYDEIDFTQFTSPKSPIFHPNTGDMIVVVDCGIKHGILYGLYKRGFSIVRVPCSFSASKIIEYNPKGIVFSNGPGNPNLLENQIKTFSELVEYKIPILGICLGHQIATLALGGKIKKMKFGHRAINKPVIESNSNKCYISTHNHGYGIISKNDIPPNTKIWFYNPDDYTIEGLIHEKLPIITTQFHPEARPGPWDTTWVFDKFRTMVTGK</sequence>
<dbReference type="EC" id="6.3.5.5" evidence="1"/>
<dbReference type="EMBL" id="U33768">
    <property type="protein sequence ID" value="AAA99058.1"/>
    <property type="molecule type" value="Genomic_DNA"/>
</dbReference>
<dbReference type="EMBL" id="Y18930">
    <property type="protein sequence ID" value="CAB57661.1"/>
    <property type="molecule type" value="Genomic_DNA"/>
</dbReference>
<dbReference type="EMBL" id="AE006641">
    <property type="protein sequence ID" value="AAK40948.1"/>
    <property type="molecule type" value="Genomic_DNA"/>
</dbReference>
<dbReference type="PIR" id="T43252">
    <property type="entry name" value="T43252"/>
</dbReference>
<dbReference type="RefSeq" id="WP_009991178.1">
    <property type="nucleotide sequence ID" value="NC_002754.1"/>
</dbReference>
<dbReference type="SMR" id="Q59968"/>
<dbReference type="FunCoup" id="Q59968">
    <property type="interactions" value="272"/>
</dbReference>
<dbReference type="STRING" id="273057.SSO0640"/>
<dbReference type="MEROPS" id="C26.A33"/>
<dbReference type="PaxDb" id="273057-SSO0640"/>
<dbReference type="EnsemblBacteria" id="AAK40948">
    <property type="protein sequence ID" value="AAK40948"/>
    <property type="gene ID" value="SSO0640"/>
</dbReference>
<dbReference type="GeneID" id="44129640"/>
<dbReference type="KEGG" id="sso:SSO0640"/>
<dbReference type="PATRIC" id="fig|273057.12.peg.645"/>
<dbReference type="eggNOG" id="arCOG00064">
    <property type="taxonomic scope" value="Archaea"/>
</dbReference>
<dbReference type="HOGENOM" id="CLU_035901_1_1_2"/>
<dbReference type="InParanoid" id="Q59968"/>
<dbReference type="PhylomeDB" id="Q59968"/>
<dbReference type="UniPathway" id="UPA00068">
    <property type="reaction ID" value="UER00171"/>
</dbReference>
<dbReference type="UniPathway" id="UPA00070">
    <property type="reaction ID" value="UER00115"/>
</dbReference>
<dbReference type="Proteomes" id="UP000001974">
    <property type="component" value="Chromosome"/>
</dbReference>
<dbReference type="GO" id="GO:0005951">
    <property type="term" value="C:carbamoyl-phosphate synthase complex"/>
    <property type="evidence" value="ECO:0000318"/>
    <property type="project" value="GO_Central"/>
</dbReference>
<dbReference type="GO" id="GO:0005737">
    <property type="term" value="C:cytoplasm"/>
    <property type="evidence" value="ECO:0000318"/>
    <property type="project" value="GO_Central"/>
</dbReference>
<dbReference type="GO" id="GO:0005524">
    <property type="term" value="F:ATP binding"/>
    <property type="evidence" value="ECO:0007669"/>
    <property type="project" value="UniProtKB-UniRule"/>
</dbReference>
<dbReference type="GO" id="GO:0004088">
    <property type="term" value="F:carbamoyl-phosphate synthase (glutamine-hydrolyzing) activity"/>
    <property type="evidence" value="ECO:0007669"/>
    <property type="project" value="UniProtKB-UniRule"/>
</dbReference>
<dbReference type="GO" id="GO:0004359">
    <property type="term" value="F:glutaminase activity"/>
    <property type="evidence" value="ECO:0007669"/>
    <property type="project" value="RHEA"/>
</dbReference>
<dbReference type="GO" id="GO:0006207">
    <property type="term" value="P:'de novo' pyrimidine nucleobase biosynthetic process"/>
    <property type="evidence" value="ECO:0007669"/>
    <property type="project" value="InterPro"/>
</dbReference>
<dbReference type="GO" id="GO:0044205">
    <property type="term" value="P:'de novo' UMP biosynthetic process"/>
    <property type="evidence" value="ECO:0007669"/>
    <property type="project" value="UniProtKB-UniRule"/>
</dbReference>
<dbReference type="GO" id="GO:0006541">
    <property type="term" value="P:glutamine metabolic process"/>
    <property type="evidence" value="ECO:0007669"/>
    <property type="project" value="InterPro"/>
</dbReference>
<dbReference type="GO" id="GO:0006526">
    <property type="term" value="P:L-arginine biosynthetic process"/>
    <property type="evidence" value="ECO:0000318"/>
    <property type="project" value="GO_Central"/>
</dbReference>
<dbReference type="CDD" id="cd01744">
    <property type="entry name" value="GATase1_CPSase"/>
    <property type="match status" value="1"/>
</dbReference>
<dbReference type="FunFam" id="3.40.50.880:FF:000086">
    <property type="entry name" value="Carbamoyl-phosphate synthase small chain"/>
    <property type="match status" value="1"/>
</dbReference>
<dbReference type="FunFam" id="3.50.30.20:FF:000001">
    <property type="entry name" value="Carbamoyl-phosphate synthase small chain"/>
    <property type="match status" value="1"/>
</dbReference>
<dbReference type="Gene3D" id="3.40.50.880">
    <property type="match status" value="1"/>
</dbReference>
<dbReference type="Gene3D" id="3.50.30.20">
    <property type="entry name" value="Carbamoyl-phosphate synthase small subunit, N-terminal domain"/>
    <property type="match status" value="1"/>
</dbReference>
<dbReference type="HAMAP" id="MF_01209">
    <property type="entry name" value="CPSase_S_chain"/>
    <property type="match status" value="1"/>
</dbReference>
<dbReference type="InterPro" id="IPR050472">
    <property type="entry name" value="Anth_synth/Amidotransfase"/>
</dbReference>
<dbReference type="InterPro" id="IPR006274">
    <property type="entry name" value="CarbamoylP_synth_ssu"/>
</dbReference>
<dbReference type="InterPro" id="IPR002474">
    <property type="entry name" value="CarbamoylP_synth_ssu_N"/>
</dbReference>
<dbReference type="InterPro" id="IPR036480">
    <property type="entry name" value="CarbP_synth_ssu_N_sf"/>
</dbReference>
<dbReference type="InterPro" id="IPR029062">
    <property type="entry name" value="Class_I_gatase-like"/>
</dbReference>
<dbReference type="InterPro" id="IPR035686">
    <property type="entry name" value="CPSase_GATase1"/>
</dbReference>
<dbReference type="InterPro" id="IPR017926">
    <property type="entry name" value="GATASE"/>
</dbReference>
<dbReference type="NCBIfam" id="TIGR01368">
    <property type="entry name" value="CPSaseIIsmall"/>
    <property type="match status" value="1"/>
</dbReference>
<dbReference type="NCBIfam" id="NF009475">
    <property type="entry name" value="PRK12838.1"/>
    <property type="match status" value="1"/>
</dbReference>
<dbReference type="PANTHER" id="PTHR43418:SF7">
    <property type="entry name" value="CARBAMOYL-PHOSPHATE SYNTHASE SMALL CHAIN"/>
    <property type="match status" value="1"/>
</dbReference>
<dbReference type="PANTHER" id="PTHR43418">
    <property type="entry name" value="MULTIFUNCTIONAL TRYPTOPHAN BIOSYNTHESIS PROTEIN-RELATED"/>
    <property type="match status" value="1"/>
</dbReference>
<dbReference type="Pfam" id="PF00988">
    <property type="entry name" value="CPSase_sm_chain"/>
    <property type="match status" value="1"/>
</dbReference>
<dbReference type="Pfam" id="PF00117">
    <property type="entry name" value="GATase"/>
    <property type="match status" value="1"/>
</dbReference>
<dbReference type="PRINTS" id="PR00097">
    <property type="entry name" value="ANTSNTHASEII"/>
</dbReference>
<dbReference type="PRINTS" id="PR00099">
    <property type="entry name" value="CPSGATASE"/>
</dbReference>
<dbReference type="PRINTS" id="PR00096">
    <property type="entry name" value="GATASE"/>
</dbReference>
<dbReference type="SMART" id="SM01097">
    <property type="entry name" value="CPSase_sm_chain"/>
    <property type="match status" value="1"/>
</dbReference>
<dbReference type="SUPFAM" id="SSF52021">
    <property type="entry name" value="Carbamoyl phosphate synthetase, small subunit N-terminal domain"/>
    <property type="match status" value="1"/>
</dbReference>
<dbReference type="SUPFAM" id="SSF52317">
    <property type="entry name" value="Class I glutamine amidotransferase-like"/>
    <property type="match status" value="1"/>
</dbReference>
<dbReference type="PROSITE" id="PS51273">
    <property type="entry name" value="GATASE_TYPE_1"/>
    <property type="match status" value="1"/>
</dbReference>
<proteinExistence type="inferred from homology"/>
<name>CARA_SACS2</name>